<evidence type="ECO:0000255" key="1">
    <source>
        <dbReference type="HAMAP-Rule" id="MF_00260"/>
    </source>
</evidence>
<dbReference type="EC" id="2.5.1.61" evidence="1"/>
<dbReference type="EMBL" id="CU928160">
    <property type="protein sequence ID" value="CAR00774.1"/>
    <property type="molecule type" value="Genomic_DNA"/>
</dbReference>
<dbReference type="RefSeq" id="WP_001307481.1">
    <property type="nucleotide sequence ID" value="NC_011741.1"/>
</dbReference>
<dbReference type="SMR" id="B7M603"/>
<dbReference type="GeneID" id="75204795"/>
<dbReference type="KEGG" id="ecr:ECIAI1_3991"/>
<dbReference type="HOGENOM" id="CLU_019704_0_2_6"/>
<dbReference type="UniPathway" id="UPA00251">
    <property type="reaction ID" value="UER00319"/>
</dbReference>
<dbReference type="GO" id="GO:0005737">
    <property type="term" value="C:cytoplasm"/>
    <property type="evidence" value="ECO:0007669"/>
    <property type="project" value="TreeGrafter"/>
</dbReference>
<dbReference type="GO" id="GO:0004418">
    <property type="term" value="F:hydroxymethylbilane synthase activity"/>
    <property type="evidence" value="ECO:0007669"/>
    <property type="project" value="UniProtKB-UniRule"/>
</dbReference>
<dbReference type="GO" id="GO:0006782">
    <property type="term" value="P:protoporphyrinogen IX biosynthetic process"/>
    <property type="evidence" value="ECO:0007669"/>
    <property type="project" value="UniProtKB-UniRule"/>
</dbReference>
<dbReference type="CDD" id="cd13646">
    <property type="entry name" value="PBP2_EcHMBS_like"/>
    <property type="match status" value="1"/>
</dbReference>
<dbReference type="FunFam" id="3.30.160.40:FF:000002">
    <property type="entry name" value="Porphobilinogen deaminase"/>
    <property type="match status" value="1"/>
</dbReference>
<dbReference type="FunFam" id="3.40.190.10:FF:000004">
    <property type="entry name" value="Porphobilinogen deaminase"/>
    <property type="match status" value="1"/>
</dbReference>
<dbReference type="FunFam" id="3.40.190.10:FF:000005">
    <property type="entry name" value="Porphobilinogen deaminase"/>
    <property type="match status" value="1"/>
</dbReference>
<dbReference type="Gene3D" id="3.40.190.10">
    <property type="entry name" value="Periplasmic binding protein-like II"/>
    <property type="match status" value="2"/>
</dbReference>
<dbReference type="Gene3D" id="3.30.160.40">
    <property type="entry name" value="Porphobilinogen deaminase, C-terminal domain"/>
    <property type="match status" value="1"/>
</dbReference>
<dbReference type="HAMAP" id="MF_00260">
    <property type="entry name" value="Porphobil_deam"/>
    <property type="match status" value="1"/>
</dbReference>
<dbReference type="InterPro" id="IPR000860">
    <property type="entry name" value="HemC"/>
</dbReference>
<dbReference type="InterPro" id="IPR022419">
    <property type="entry name" value="Porphobilin_deaminase_cofac_BS"/>
</dbReference>
<dbReference type="InterPro" id="IPR022417">
    <property type="entry name" value="Porphobilin_deaminase_N"/>
</dbReference>
<dbReference type="InterPro" id="IPR022418">
    <property type="entry name" value="Porphobilinogen_deaminase_C"/>
</dbReference>
<dbReference type="InterPro" id="IPR036803">
    <property type="entry name" value="Porphobilinogen_deaminase_C_sf"/>
</dbReference>
<dbReference type="NCBIfam" id="TIGR00212">
    <property type="entry name" value="hemC"/>
    <property type="match status" value="1"/>
</dbReference>
<dbReference type="PANTHER" id="PTHR11557">
    <property type="entry name" value="PORPHOBILINOGEN DEAMINASE"/>
    <property type="match status" value="1"/>
</dbReference>
<dbReference type="PANTHER" id="PTHR11557:SF0">
    <property type="entry name" value="PORPHOBILINOGEN DEAMINASE"/>
    <property type="match status" value="1"/>
</dbReference>
<dbReference type="Pfam" id="PF01379">
    <property type="entry name" value="Porphobil_deam"/>
    <property type="match status" value="1"/>
</dbReference>
<dbReference type="Pfam" id="PF03900">
    <property type="entry name" value="Porphobil_deamC"/>
    <property type="match status" value="1"/>
</dbReference>
<dbReference type="PIRSF" id="PIRSF001438">
    <property type="entry name" value="4pyrrol_synth_OHMeBilane_synth"/>
    <property type="match status" value="1"/>
</dbReference>
<dbReference type="PRINTS" id="PR00151">
    <property type="entry name" value="PORPHBDMNASE"/>
</dbReference>
<dbReference type="SUPFAM" id="SSF53850">
    <property type="entry name" value="Periplasmic binding protein-like II"/>
    <property type="match status" value="1"/>
</dbReference>
<dbReference type="SUPFAM" id="SSF54782">
    <property type="entry name" value="Porphobilinogen deaminase (hydroxymethylbilane synthase), C-terminal domain"/>
    <property type="match status" value="1"/>
</dbReference>
<dbReference type="PROSITE" id="PS00533">
    <property type="entry name" value="PORPHOBILINOGEN_DEAM"/>
    <property type="match status" value="1"/>
</dbReference>
<organism>
    <name type="scientific">Escherichia coli O8 (strain IAI1)</name>
    <dbReference type="NCBI Taxonomy" id="585034"/>
    <lineage>
        <taxon>Bacteria</taxon>
        <taxon>Pseudomonadati</taxon>
        <taxon>Pseudomonadota</taxon>
        <taxon>Gammaproteobacteria</taxon>
        <taxon>Enterobacterales</taxon>
        <taxon>Enterobacteriaceae</taxon>
        <taxon>Escherichia</taxon>
    </lineage>
</organism>
<gene>
    <name evidence="1" type="primary">hemC</name>
    <name type="ordered locus">ECIAI1_3991</name>
</gene>
<reference key="1">
    <citation type="journal article" date="2009" name="PLoS Genet.">
        <title>Organised genome dynamics in the Escherichia coli species results in highly diverse adaptive paths.</title>
        <authorList>
            <person name="Touchon M."/>
            <person name="Hoede C."/>
            <person name="Tenaillon O."/>
            <person name="Barbe V."/>
            <person name="Baeriswyl S."/>
            <person name="Bidet P."/>
            <person name="Bingen E."/>
            <person name="Bonacorsi S."/>
            <person name="Bouchier C."/>
            <person name="Bouvet O."/>
            <person name="Calteau A."/>
            <person name="Chiapello H."/>
            <person name="Clermont O."/>
            <person name="Cruveiller S."/>
            <person name="Danchin A."/>
            <person name="Diard M."/>
            <person name="Dossat C."/>
            <person name="Karoui M.E."/>
            <person name="Frapy E."/>
            <person name="Garry L."/>
            <person name="Ghigo J.M."/>
            <person name="Gilles A.M."/>
            <person name="Johnson J."/>
            <person name="Le Bouguenec C."/>
            <person name="Lescat M."/>
            <person name="Mangenot S."/>
            <person name="Martinez-Jehanne V."/>
            <person name="Matic I."/>
            <person name="Nassif X."/>
            <person name="Oztas S."/>
            <person name="Petit M.A."/>
            <person name="Pichon C."/>
            <person name="Rouy Z."/>
            <person name="Ruf C.S."/>
            <person name="Schneider D."/>
            <person name="Tourret J."/>
            <person name="Vacherie B."/>
            <person name="Vallenet D."/>
            <person name="Medigue C."/>
            <person name="Rocha E.P.C."/>
            <person name="Denamur E."/>
        </authorList>
    </citation>
    <scope>NUCLEOTIDE SEQUENCE [LARGE SCALE GENOMIC DNA]</scope>
    <source>
        <strain>IAI1</strain>
    </source>
</reference>
<protein>
    <recommendedName>
        <fullName evidence="1">Porphobilinogen deaminase</fullName>
        <shortName evidence="1">PBG</shortName>
        <ecNumber evidence="1">2.5.1.61</ecNumber>
    </recommendedName>
    <alternativeName>
        <fullName evidence="1">Hydroxymethylbilane synthase</fullName>
        <shortName evidence="1">HMBS</shortName>
    </alternativeName>
    <alternativeName>
        <fullName evidence="1">Pre-uroporphyrinogen synthase</fullName>
    </alternativeName>
</protein>
<keyword id="KW-0627">Porphyrin biosynthesis</keyword>
<keyword id="KW-0808">Transferase</keyword>
<name>HEM3_ECO8A</name>
<sequence>MLDNVLRIATRQSPLALWQAHYVKDKLMASHPGLVVELVPMVTRGDVILDTPLAKVGGKGLFVKELEVALLENRADIAVHSMKDVPVEFPQGLGLVTICEREDPRDAFVSNNYDSLDALPAGSIVGTSSLRRQCQLAERRPDLIIRSLRGNVGTRLSKLDNGEYDAIILAVAGLKRLGLESRIRAALPPEISLPAVGQGAVGIECRLDDTRTRELLAALNHHETALRVTAERAMNTRLEGGCQVPIGSYAELIDGEIWLRALVGAPDGSQIIRGERRGAPQNAEQMGISLAEELLNNGAREILAEVYNGDAPA</sequence>
<proteinExistence type="inferred from homology"/>
<comment type="function">
    <text evidence="1">Tetrapolymerization of the monopyrrole PBG into the hydroxymethylbilane pre-uroporphyrinogen in several discrete steps.</text>
</comment>
<comment type="catalytic activity">
    <reaction evidence="1">
        <text>4 porphobilinogen + H2O = hydroxymethylbilane + 4 NH4(+)</text>
        <dbReference type="Rhea" id="RHEA:13185"/>
        <dbReference type="ChEBI" id="CHEBI:15377"/>
        <dbReference type="ChEBI" id="CHEBI:28938"/>
        <dbReference type="ChEBI" id="CHEBI:57845"/>
        <dbReference type="ChEBI" id="CHEBI:58126"/>
        <dbReference type="EC" id="2.5.1.61"/>
    </reaction>
</comment>
<comment type="cofactor">
    <cofactor evidence="1">
        <name>dipyrromethane</name>
        <dbReference type="ChEBI" id="CHEBI:60342"/>
    </cofactor>
    <text evidence="1">Binds 1 dipyrromethane group covalently.</text>
</comment>
<comment type="pathway">
    <text evidence="1">Porphyrin-containing compound metabolism; protoporphyrin-IX biosynthesis; coproporphyrinogen-III from 5-aminolevulinate: step 2/4.</text>
</comment>
<comment type="subunit">
    <text evidence="1">Monomer.</text>
</comment>
<comment type="miscellaneous">
    <text evidence="1">The porphobilinogen subunits are added to the dipyrromethane group.</text>
</comment>
<comment type="similarity">
    <text evidence="1">Belongs to the HMBS family.</text>
</comment>
<accession>B7M603</accession>
<feature type="chain" id="PRO_1000119216" description="Porphobilinogen deaminase">
    <location>
        <begin position="1"/>
        <end position="313"/>
    </location>
</feature>
<feature type="modified residue" description="S-(dipyrrolylmethanemethyl)cysteine" evidence="1">
    <location>
        <position position="242"/>
    </location>
</feature>